<sequence>MKTKLNELLEFPCVFTYKVMGEAKPELVDLVVEVVQRHAPGDYTPQIKPSSKGNYHSVSITITATHIEQVETLYEELGNIDIVRMVL</sequence>
<feature type="chain" id="PRO_1000212472" description="UPF0250 protein PC1_1177">
    <location>
        <begin position="1"/>
        <end position="87"/>
    </location>
</feature>
<name>Y1177_PECCP</name>
<evidence type="ECO:0000255" key="1">
    <source>
        <dbReference type="HAMAP-Rule" id="MF_00659"/>
    </source>
</evidence>
<dbReference type="EMBL" id="CP001657">
    <property type="protein sequence ID" value="ACT12225.1"/>
    <property type="molecule type" value="Genomic_DNA"/>
</dbReference>
<dbReference type="SMR" id="C6DBV8"/>
<dbReference type="STRING" id="561230.PC1_1177"/>
<dbReference type="KEGG" id="pct:PC1_1177"/>
<dbReference type="eggNOG" id="COG2921">
    <property type="taxonomic scope" value="Bacteria"/>
</dbReference>
<dbReference type="HOGENOM" id="CLU_161438_2_1_6"/>
<dbReference type="OrthoDB" id="9793424at2"/>
<dbReference type="Proteomes" id="UP000002736">
    <property type="component" value="Chromosome"/>
</dbReference>
<dbReference type="GO" id="GO:0005829">
    <property type="term" value="C:cytosol"/>
    <property type="evidence" value="ECO:0007669"/>
    <property type="project" value="TreeGrafter"/>
</dbReference>
<dbReference type="FunFam" id="3.30.70.260:FF:000002">
    <property type="entry name" value="UPF0250 protein YbeD"/>
    <property type="match status" value="1"/>
</dbReference>
<dbReference type="Gene3D" id="3.30.70.260">
    <property type="match status" value="1"/>
</dbReference>
<dbReference type="HAMAP" id="MF_00659">
    <property type="entry name" value="UPF0250"/>
    <property type="match status" value="1"/>
</dbReference>
<dbReference type="InterPro" id="IPR007454">
    <property type="entry name" value="UPF0250_YbeD-like"/>
</dbReference>
<dbReference type="InterPro" id="IPR027471">
    <property type="entry name" value="YbeD-like_sf"/>
</dbReference>
<dbReference type="NCBIfam" id="NF003447">
    <property type="entry name" value="PRK04998.1"/>
    <property type="match status" value="1"/>
</dbReference>
<dbReference type="PANTHER" id="PTHR38036">
    <property type="entry name" value="UPF0250 PROTEIN YBED"/>
    <property type="match status" value="1"/>
</dbReference>
<dbReference type="PANTHER" id="PTHR38036:SF1">
    <property type="entry name" value="UPF0250 PROTEIN YBED"/>
    <property type="match status" value="1"/>
</dbReference>
<dbReference type="Pfam" id="PF04359">
    <property type="entry name" value="DUF493"/>
    <property type="match status" value="1"/>
</dbReference>
<dbReference type="SUPFAM" id="SSF117991">
    <property type="entry name" value="YbeD/HP0495-like"/>
    <property type="match status" value="1"/>
</dbReference>
<reference key="1">
    <citation type="submission" date="2009-07" db="EMBL/GenBank/DDBJ databases">
        <title>Complete sequence of Pectobacterium carotovorum subsp. carotovorum PC1.</title>
        <authorList>
            <consortium name="US DOE Joint Genome Institute"/>
            <person name="Lucas S."/>
            <person name="Copeland A."/>
            <person name="Lapidus A."/>
            <person name="Glavina del Rio T."/>
            <person name="Tice H."/>
            <person name="Bruce D."/>
            <person name="Goodwin L."/>
            <person name="Pitluck S."/>
            <person name="Munk A.C."/>
            <person name="Brettin T."/>
            <person name="Detter J.C."/>
            <person name="Han C."/>
            <person name="Tapia R."/>
            <person name="Larimer F."/>
            <person name="Land M."/>
            <person name="Hauser L."/>
            <person name="Kyrpides N."/>
            <person name="Mikhailova N."/>
            <person name="Balakrishnan V."/>
            <person name="Glasner J."/>
            <person name="Perna N.T."/>
        </authorList>
    </citation>
    <scope>NUCLEOTIDE SEQUENCE [LARGE SCALE GENOMIC DNA]</scope>
    <source>
        <strain>PC1</strain>
    </source>
</reference>
<organism>
    <name type="scientific">Pectobacterium carotovorum subsp. carotovorum (strain PC1)</name>
    <dbReference type="NCBI Taxonomy" id="561230"/>
    <lineage>
        <taxon>Bacteria</taxon>
        <taxon>Pseudomonadati</taxon>
        <taxon>Pseudomonadota</taxon>
        <taxon>Gammaproteobacteria</taxon>
        <taxon>Enterobacterales</taxon>
        <taxon>Pectobacteriaceae</taxon>
        <taxon>Pectobacterium</taxon>
    </lineage>
</organism>
<comment type="similarity">
    <text evidence="1">Belongs to the UPF0250 family.</text>
</comment>
<accession>C6DBV8</accession>
<protein>
    <recommendedName>
        <fullName evidence="1">UPF0250 protein PC1_1177</fullName>
    </recommendedName>
</protein>
<proteinExistence type="inferred from homology"/>
<gene>
    <name type="ordered locus">PC1_1177</name>
</gene>